<keyword id="KW-1185">Reference proteome</keyword>
<keyword id="KW-0687">Ribonucleoprotein</keyword>
<keyword id="KW-0689">Ribosomal protein</keyword>
<evidence type="ECO:0000255" key="1">
    <source>
        <dbReference type="HAMAP-Rule" id="MF_00368"/>
    </source>
</evidence>
<evidence type="ECO:0000256" key="2">
    <source>
        <dbReference type="SAM" id="MobiDB-lite"/>
    </source>
</evidence>
<evidence type="ECO:0000305" key="3"/>
<name>RL7_PARXL</name>
<proteinExistence type="inferred from homology"/>
<gene>
    <name evidence="1" type="primary">rplL</name>
    <name type="ordered locus">Bxeno_A4090</name>
    <name type="ORF">Bxe_A0305</name>
</gene>
<comment type="function">
    <text evidence="1">Forms part of the ribosomal stalk which helps the ribosome interact with GTP-bound translation factors. Is thus essential for accurate translation.</text>
</comment>
<comment type="subunit">
    <text evidence="1">Homodimer. Part of the ribosomal stalk of the 50S ribosomal subunit. Forms a multimeric L10(L12)X complex, where L10 forms an elongated spine to which 2 to 4 L12 dimers bind in a sequential fashion. Binds GTP-bound translation factors.</text>
</comment>
<comment type="similarity">
    <text evidence="1">Belongs to the bacterial ribosomal protein bL12 family.</text>
</comment>
<accession>Q13TG1</accession>
<dbReference type="EMBL" id="CP000270">
    <property type="protein sequence ID" value="ABE32628.1"/>
    <property type="molecule type" value="Genomic_DNA"/>
</dbReference>
<dbReference type="RefSeq" id="WP_011490060.1">
    <property type="nucleotide sequence ID" value="NZ_CP008760.1"/>
</dbReference>
<dbReference type="SMR" id="Q13TG1"/>
<dbReference type="STRING" id="266265.Bxe_A0305"/>
<dbReference type="GeneID" id="97311156"/>
<dbReference type="KEGG" id="bxb:DR64_2475"/>
<dbReference type="KEGG" id="bxe:Bxe_A0305"/>
<dbReference type="eggNOG" id="COG0222">
    <property type="taxonomic scope" value="Bacteria"/>
</dbReference>
<dbReference type="OrthoDB" id="9811748at2"/>
<dbReference type="Proteomes" id="UP000001817">
    <property type="component" value="Chromosome 1"/>
</dbReference>
<dbReference type="GO" id="GO:0022625">
    <property type="term" value="C:cytosolic large ribosomal subunit"/>
    <property type="evidence" value="ECO:0007669"/>
    <property type="project" value="TreeGrafter"/>
</dbReference>
<dbReference type="GO" id="GO:0003729">
    <property type="term" value="F:mRNA binding"/>
    <property type="evidence" value="ECO:0007669"/>
    <property type="project" value="TreeGrafter"/>
</dbReference>
<dbReference type="GO" id="GO:0003735">
    <property type="term" value="F:structural constituent of ribosome"/>
    <property type="evidence" value="ECO:0007669"/>
    <property type="project" value="InterPro"/>
</dbReference>
<dbReference type="GO" id="GO:0006412">
    <property type="term" value="P:translation"/>
    <property type="evidence" value="ECO:0007669"/>
    <property type="project" value="UniProtKB-UniRule"/>
</dbReference>
<dbReference type="CDD" id="cd00387">
    <property type="entry name" value="Ribosomal_L7_L12"/>
    <property type="match status" value="1"/>
</dbReference>
<dbReference type="FunFam" id="3.30.1390.10:FF:000001">
    <property type="entry name" value="50S ribosomal protein L7/L12"/>
    <property type="match status" value="1"/>
</dbReference>
<dbReference type="Gene3D" id="3.30.1390.10">
    <property type="match status" value="1"/>
</dbReference>
<dbReference type="Gene3D" id="1.20.5.710">
    <property type="entry name" value="Single helix bin"/>
    <property type="match status" value="1"/>
</dbReference>
<dbReference type="HAMAP" id="MF_00368">
    <property type="entry name" value="Ribosomal_bL12"/>
    <property type="match status" value="1"/>
</dbReference>
<dbReference type="InterPro" id="IPR000206">
    <property type="entry name" value="Ribosomal_bL12"/>
</dbReference>
<dbReference type="InterPro" id="IPR013823">
    <property type="entry name" value="Ribosomal_bL12_C"/>
</dbReference>
<dbReference type="InterPro" id="IPR014719">
    <property type="entry name" value="Ribosomal_bL12_C/ClpS-like"/>
</dbReference>
<dbReference type="InterPro" id="IPR008932">
    <property type="entry name" value="Ribosomal_bL12_oligo"/>
</dbReference>
<dbReference type="InterPro" id="IPR036235">
    <property type="entry name" value="Ribosomal_bL12_oligo_N_sf"/>
</dbReference>
<dbReference type="NCBIfam" id="TIGR00855">
    <property type="entry name" value="L12"/>
    <property type="match status" value="1"/>
</dbReference>
<dbReference type="PANTHER" id="PTHR45987">
    <property type="entry name" value="39S RIBOSOMAL PROTEIN L12"/>
    <property type="match status" value="1"/>
</dbReference>
<dbReference type="PANTHER" id="PTHR45987:SF4">
    <property type="entry name" value="LARGE RIBOSOMAL SUBUNIT PROTEIN BL12M"/>
    <property type="match status" value="1"/>
</dbReference>
<dbReference type="Pfam" id="PF00542">
    <property type="entry name" value="Ribosomal_L12"/>
    <property type="match status" value="1"/>
</dbReference>
<dbReference type="Pfam" id="PF16320">
    <property type="entry name" value="Ribosomal_L12_N"/>
    <property type="match status" value="1"/>
</dbReference>
<dbReference type="SUPFAM" id="SSF54736">
    <property type="entry name" value="ClpS-like"/>
    <property type="match status" value="1"/>
</dbReference>
<dbReference type="SUPFAM" id="SSF48300">
    <property type="entry name" value="Ribosomal protein L7/12, oligomerisation (N-terminal) domain"/>
    <property type="match status" value="1"/>
</dbReference>
<reference key="1">
    <citation type="journal article" date="2006" name="Proc. Natl. Acad. Sci. U.S.A.">
        <title>Burkholderia xenovorans LB400 harbors a multi-replicon, 9.73-Mbp genome shaped for versatility.</title>
        <authorList>
            <person name="Chain P.S.G."/>
            <person name="Denef V.J."/>
            <person name="Konstantinidis K.T."/>
            <person name="Vergez L.M."/>
            <person name="Agullo L."/>
            <person name="Reyes V.L."/>
            <person name="Hauser L."/>
            <person name="Cordova M."/>
            <person name="Gomez L."/>
            <person name="Gonzalez M."/>
            <person name="Land M."/>
            <person name="Lao V."/>
            <person name="Larimer F."/>
            <person name="LiPuma J.J."/>
            <person name="Mahenthiralingam E."/>
            <person name="Malfatti S.A."/>
            <person name="Marx C.J."/>
            <person name="Parnell J.J."/>
            <person name="Ramette A."/>
            <person name="Richardson P."/>
            <person name="Seeger M."/>
            <person name="Smith D."/>
            <person name="Spilker T."/>
            <person name="Sul W.J."/>
            <person name="Tsoi T.V."/>
            <person name="Ulrich L.E."/>
            <person name="Zhulin I.B."/>
            <person name="Tiedje J.M."/>
        </authorList>
    </citation>
    <scope>NUCLEOTIDE SEQUENCE [LARGE SCALE GENOMIC DNA]</scope>
    <source>
        <strain>LB400</strain>
    </source>
</reference>
<sequence length="124" mass="12647">MAIAKEDILEAVSSMSVLELNELVKAFEEKFGVSAAAVAVAGPAGGGAAAAAEEQTEFTVNLTEVGANKVSVIKAVRELTGLGLKEAKDLVDGAPKPVKESVPKAAAEEAKKKLEEAGAKAEIK</sequence>
<feature type="chain" id="PRO_1000006977" description="Large ribosomal subunit protein bL12">
    <location>
        <begin position="1"/>
        <end position="124"/>
    </location>
</feature>
<feature type="region of interest" description="Disordered" evidence="2">
    <location>
        <begin position="94"/>
        <end position="124"/>
    </location>
</feature>
<protein>
    <recommendedName>
        <fullName evidence="1">Large ribosomal subunit protein bL12</fullName>
    </recommendedName>
    <alternativeName>
        <fullName evidence="3">50S ribosomal protein L7/L12</fullName>
    </alternativeName>
</protein>
<organism>
    <name type="scientific">Paraburkholderia xenovorans (strain LB400)</name>
    <dbReference type="NCBI Taxonomy" id="266265"/>
    <lineage>
        <taxon>Bacteria</taxon>
        <taxon>Pseudomonadati</taxon>
        <taxon>Pseudomonadota</taxon>
        <taxon>Betaproteobacteria</taxon>
        <taxon>Burkholderiales</taxon>
        <taxon>Burkholderiaceae</taxon>
        <taxon>Paraburkholderia</taxon>
    </lineage>
</organism>